<dbReference type="EMBL" id="AP005808">
    <property type="protein sequence ID" value="BAD16420.1"/>
    <property type="molecule type" value="Genomic_DNA"/>
</dbReference>
<dbReference type="EMBL" id="AP008208">
    <property type="protein sequence ID" value="BAF09051.1"/>
    <property type="molecule type" value="Genomic_DNA"/>
</dbReference>
<dbReference type="EMBL" id="AP014958">
    <property type="protein sequence ID" value="BAS79226.1"/>
    <property type="molecule type" value="Genomic_DNA"/>
</dbReference>
<dbReference type="EMBL" id="CM000139">
    <property type="protein sequence ID" value="EEE57194.1"/>
    <property type="molecule type" value="Genomic_DNA"/>
</dbReference>
<dbReference type="EMBL" id="AK070026">
    <property type="status" value="NOT_ANNOTATED_CDS"/>
    <property type="molecule type" value="mRNA"/>
</dbReference>
<dbReference type="RefSeq" id="XP_015625501.1">
    <property type="nucleotide sequence ID" value="XM_015770015.1"/>
</dbReference>
<dbReference type="SMR" id="Q6YVY0"/>
<dbReference type="FunCoup" id="Q6YVY0">
    <property type="interactions" value="2786"/>
</dbReference>
<dbReference type="STRING" id="39947.Q6YVY0"/>
<dbReference type="PaxDb" id="39947-Q6YVY0"/>
<dbReference type="EnsemblPlants" id="Os02t0557200-01">
    <property type="protein sequence ID" value="Os02t0557200-01"/>
    <property type="gene ID" value="Os02g0557200"/>
</dbReference>
<dbReference type="Gramene" id="Os02t0557200-01">
    <property type="protein sequence ID" value="Os02t0557200-01"/>
    <property type="gene ID" value="Os02g0557200"/>
</dbReference>
<dbReference type="KEGG" id="dosa:Os02g0557200"/>
<dbReference type="eggNOG" id="ENOG502QQSN">
    <property type="taxonomic scope" value="Eukaryota"/>
</dbReference>
<dbReference type="HOGENOM" id="CLU_002626_4_4_1"/>
<dbReference type="InParanoid" id="Q6YVY0"/>
<dbReference type="OMA" id="SSNSMYW"/>
<dbReference type="OrthoDB" id="1050118at2759"/>
<dbReference type="PlantReactome" id="R-OSA-5608118">
    <property type="pathway name" value="Auxin signalling"/>
</dbReference>
<dbReference type="Proteomes" id="UP000000763">
    <property type="component" value="Chromosome 2"/>
</dbReference>
<dbReference type="Proteomes" id="UP000007752">
    <property type="component" value="Chromosome 2"/>
</dbReference>
<dbReference type="Proteomes" id="UP000059680">
    <property type="component" value="Chromosome 2"/>
</dbReference>
<dbReference type="GO" id="GO:0005634">
    <property type="term" value="C:nucleus"/>
    <property type="evidence" value="ECO:0007669"/>
    <property type="project" value="UniProtKB-SubCell"/>
</dbReference>
<dbReference type="GO" id="GO:0003677">
    <property type="term" value="F:DNA binding"/>
    <property type="evidence" value="ECO:0007669"/>
    <property type="project" value="UniProtKB-KW"/>
</dbReference>
<dbReference type="GO" id="GO:0009734">
    <property type="term" value="P:auxin-activated signaling pathway"/>
    <property type="evidence" value="ECO:0007669"/>
    <property type="project" value="UniProtKB-KW"/>
</dbReference>
<dbReference type="GO" id="GO:0006355">
    <property type="term" value="P:regulation of DNA-templated transcription"/>
    <property type="evidence" value="ECO:0007669"/>
    <property type="project" value="InterPro"/>
</dbReference>
<dbReference type="CDD" id="cd10017">
    <property type="entry name" value="B3_DNA"/>
    <property type="match status" value="1"/>
</dbReference>
<dbReference type="FunFam" id="2.30.30.1040:FF:000001">
    <property type="entry name" value="Auxin response factor"/>
    <property type="match status" value="1"/>
</dbReference>
<dbReference type="FunFam" id="2.40.330.10:FF:000001">
    <property type="entry name" value="Auxin response factor"/>
    <property type="match status" value="1"/>
</dbReference>
<dbReference type="FunFam" id="3.10.20.90:FF:000047">
    <property type="entry name" value="Auxin response factor"/>
    <property type="match status" value="1"/>
</dbReference>
<dbReference type="Gene3D" id="2.30.30.1040">
    <property type="match status" value="1"/>
</dbReference>
<dbReference type="Gene3D" id="2.40.330.10">
    <property type="entry name" value="DNA-binding pseudobarrel domain"/>
    <property type="match status" value="1"/>
</dbReference>
<dbReference type="Gene3D" id="3.10.20.90">
    <property type="entry name" value="Phosphatidylinositol 3-kinase Catalytic Subunit, Chain A, domain 1"/>
    <property type="match status" value="1"/>
</dbReference>
<dbReference type="InterPro" id="IPR010525">
    <property type="entry name" value="ARF_dom"/>
</dbReference>
<dbReference type="InterPro" id="IPR044835">
    <property type="entry name" value="ARF_plant"/>
</dbReference>
<dbReference type="InterPro" id="IPR033389">
    <property type="entry name" value="AUX/IAA_dom"/>
</dbReference>
<dbReference type="InterPro" id="IPR003340">
    <property type="entry name" value="B3_DNA-bd"/>
</dbReference>
<dbReference type="InterPro" id="IPR015300">
    <property type="entry name" value="DNA-bd_pseudobarrel_sf"/>
</dbReference>
<dbReference type="InterPro" id="IPR053793">
    <property type="entry name" value="PB1-like"/>
</dbReference>
<dbReference type="PANTHER" id="PTHR31384:SF96">
    <property type="entry name" value="AUXIN RESPONSE FACTOR 1"/>
    <property type="match status" value="1"/>
</dbReference>
<dbReference type="PANTHER" id="PTHR31384">
    <property type="entry name" value="AUXIN RESPONSE FACTOR 4-RELATED"/>
    <property type="match status" value="1"/>
</dbReference>
<dbReference type="Pfam" id="PF06507">
    <property type="entry name" value="ARF_AD"/>
    <property type="match status" value="1"/>
</dbReference>
<dbReference type="Pfam" id="PF02309">
    <property type="entry name" value="AUX_IAA"/>
    <property type="match status" value="2"/>
</dbReference>
<dbReference type="Pfam" id="PF02362">
    <property type="entry name" value="B3"/>
    <property type="match status" value="1"/>
</dbReference>
<dbReference type="SMART" id="SM01019">
    <property type="entry name" value="B3"/>
    <property type="match status" value="1"/>
</dbReference>
<dbReference type="SUPFAM" id="SSF54277">
    <property type="entry name" value="CAD &amp; PB1 domains"/>
    <property type="match status" value="1"/>
</dbReference>
<dbReference type="SUPFAM" id="SSF101936">
    <property type="entry name" value="DNA-binding pseudobarrel domain"/>
    <property type="match status" value="1"/>
</dbReference>
<dbReference type="PROSITE" id="PS50863">
    <property type="entry name" value="B3"/>
    <property type="match status" value="1"/>
</dbReference>
<dbReference type="PROSITE" id="PS51745">
    <property type="entry name" value="PB1"/>
    <property type="match status" value="1"/>
</dbReference>
<evidence type="ECO:0000250" key="1"/>
<evidence type="ECO:0000255" key="2">
    <source>
        <dbReference type="PROSITE-ProRule" id="PRU00326"/>
    </source>
</evidence>
<evidence type="ECO:0000255" key="3">
    <source>
        <dbReference type="PROSITE-ProRule" id="PRU01081"/>
    </source>
</evidence>
<evidence type="ECO:0000256" key="4">
    <source>
        <dbReference type="SAM" id="MobiDB-lite"/>
    </source>
</evidence>
<evidence type="ECO:0000269" key="5">
    <source>
    </source>
</evidence>
<evidence type="ECO:0000305" key="6"/>
<evidence type="ECO:0000312" key="7">
    <source>
        <dbReference type="EMBL" id="EEE57194.1"/>
    </source>
</evidence>
<gene>
    <name type="primary">ARF7</name>
    <name type="ordered locus">Os02g0557200</name>
    <name type="ordered locus">LOC_Os02g35140</name>
    <name evidence="7" type="ORF">OsJ_07141</name>
    <name type="ORF">OSJNBb0038F20.6</name>
</gene>
<name>ARFG_ORYSJ</name>
<proteinExistence type="evidence at transcript level"/>
<organism>
    <name type="scientific">Oryza sativa subsp. japonica</name>
    <name type="common">Rice</name>
    <dbReference type="NCBI Taxonomy" id="39947"/>
    <lineage>
        <taxon>Eukaryota</taxon>
        <taxon>Viridiplantae</taxon>
        <taxon>Streptophyta</taxon>
        <taxon>Embryophyta</taxon>
        <taxon>Tracheophyta</taxon>
        <taxon>Spermatophyta</taxon>
        <taxon>Magnoliopsida</taxon>
        <taxon>Liliopsida</taxon>
        <taxon>Poales</taxon>
        <taxon>Poaceae</taxon>
        <taxon>BOP clade</taxon>
        <taxon>Oryzoideae</taxon>
        <taxon>Oryzeae</taxon>
        <taxon>Oryzinae</taxon>
        <taxon>Oryza</taxon>
        <taxon>Oryza sativa</taxon>
    </lineage>
</organism>
<sequence>MAGSVVAAAAAAGGGTGSSCDALYRELWHACAGPLVTVPRQGELVYYFPQGHMEQLEASTDQQLDQHLPLFNLPSKILCKVVNVELRAETDSDEVYAQIMLQPEADQNELTSPKPEPHEPEKCNVHSFCKTLTASDTSTHGGFSVLRRHAEECLPPLDMTQNPPWQELVARDLHGNEWHFRHIFRGQPRRHLLTTGWSVFVSSKRLVAGDAFIFLRGENGELRVGVRRLMRQLNNMPSSVISSHSMHLGVLATASHAISTGTLFSVFYKPRTSQSEFVVSANKYLEAKNSKISVGMRFKMRFEGDEAPERRFSGTIIGVGSMSTSPWANSDWRSLKVQWDEPSVVPRPDRVSPWELEPLAVSNSQPSPQPPARNKRARPPASNSIAPELPPVFGLWKSSAESTQGFSFSGLQRTQELYPSSPNPIFSTSLNVGFSTKNEPSALSNKHFYWPMRETRANSYSASISKVPSEKKQEPSSAGCRLFGIEISSAVEATSPLAAVSGVGQDQPAASVDAESDQLSQPSHANKSDAPAASSEPSPHETQSRQVRSCTKVIMQGMAVGRAVDLTRLHGYDDLRCKLEEMFDIQGELSASLKKWKVVYTDDEDDMMLVGDDPWPEFCSMVKRIYIYTYEEAKQLTPKSKLPIIGDAIKPNPNKQSPESDMPHSDLDSTAPVTDKDC</sequence>
<protein>
    <recommendedName>
        <fullName>Auxin response factor 7</fullName>
    </recommendedName>
</protein>
<reference key="1">
    <citation type="journal article" date="2005" name="Nature">
        <title>The map-based sequence of the rice genome.</title>
        <authorList>
            <consortium name="International rice genome sequencing project (IRGSP)"/>
        </authorList>
    </citation>
    <scope>NUCLEOTIDE SEQUENCE [LARGE SCALE GENOMIC DNA]</scope>
    <source>
        <strain>cv. Nipponbare</strain>
    </source>
</reference>
<reference key="2">
    <citation type="journal article" date="2008" name="Nucleic Acids Res.">
        <title>The rice annotation project database (RAP-DB): 2008 update.</title>
        <authorList>
            <consortium name="The rice annotation project (RAP)"/>
        </authorList>
    </citation>
    <scope>GENOME REANNOTATION</scope>
    <source>
        <strain>cv. Nipponbare</strain>
    </source>
</reference>
<reference key="3">
    <citation type="journal article" date="2013" name="Rice">
        <title>Improvement of the Oryza sativa Nipponbare reference genome using next generation sequence and optical map data.</title>
        <authorList>
            <person name="Kawahara Y."/>
            <person name="de la Bastide M."/>
            <person name="Hamilton J.P."/>
            <person name="Kanamori H."/>
            <person name="McCombie W.R."/>
            <person name="Ouyang S."/>
            <person name="Schwartz D.C."/>
            <person name="Tanaka T."/>
            <person name="Wu J."/>
            <person name="Zhou S."/>
            <person name="Childs K.L."/>
            <person name="Davidson R.M."/>
            <person name="Lin H."/>
            <person name="Quesada-Ocampo L."/>
            <person name="Vaillancourt B."/>
            <person name="Sakai H."/>
            <person name="Lee S.S."/>
            <person name="Kim J."/>
            <person name="Numa H."/>
            <person name="Itoh T."/>
            <person name="Buell C.R."/>
            <person name="Matsumoto T."/>
        </authorList>
    </citation>
    <scope>GENOME REANNOTATION</scope>
    <source>
        <strain>cv. Nipponbare</strain>
    </source>
</reference>
<reference key="4">
    <citation type="journal article" date="2005" name="PLoS Biol.">
        <title>The genomes of Oryza sativa: a history of duplications.</title>
        <authorList>
            <person name="Yu J."/>
            <person name="Wang J."/>
            <person name="Lin W."/>
            <person name="Li S."/>
            <person name="Li H."/>
            <person name="Zhou J."/>
            <person name="Ni P."/>
            <person name="Dong W."/>
            <person name="Hu S."/>
            <person name="Zeng C."/>
            <person name="Zhang J."/>
            <person name="Zhang Y."/>
            <person name="Li R."/>
            <person name="Xu Z."/>
            <person name="Li S."/>
            <person name="Li X."/>
            <person name="Zheng H."/>
            <person name="Cong L."/>
            <person name="Lin L."/>
            <person name="Yin J."/>
            <person name="Geng J."/>
            <person name="Li G."/>
            <person name="Shi J."/>
            <person name="Liu J."/>
            <person name="Lv H."/>
            <person name="Li J."/>
            <person name="Wang J."/>
            <person name="Deng Y."/>
            <person name="Ran L."/>
            <person name="Shi X."/>
            <person name="Wang X."/>
            <person name="Wu Q."/>
            <person name="Li C."/>
            <person name="Ren X."/>
            <person name="Wang J."/>
            <person name="Wang X."/>
            <person name="Li D."/>
            <person name="Liu D."/>
            <person name="Zhang X."/>
            <person name="Ji Z."/>
            <person name="Zhao W."/>
            <person name="Sun Y."/>
            <person name="Zhang Z."/>
            <person name="Bao J."/>
            <person name="Han Y."/>
            <person name="Dong L."/>
            <person name="Ji J."/>
            <person name="Chen P."/>
            <person name="Wu S."/>
            <person name="Liu J."/>
            <person name="Xiao Y."/>
            <person name="Bu D."/>
            <person name="Tan J."/>
            <person name="Yang L."/>
            <person name="Ye C."/>
            <person name="Zhang J."/>
            <person name="Xu J."/>
            <person name="Zhou Y."/>
            <person name="Yu Y."/>
            <person name="Zhang B."/>
            <person name="Zhuang S."/>
            <person name="Wei H."/>
            <person name="Liu B."/>
            <person name="Lei M."/>
            <person name="Yu H."/>
            <person name="Li Y."/>
            <person name="Xu H."/>
            <person name="Wei S."/>
            <person name="He X."/>
            <person name="Fang L."/>
            <person name="Zhang Z."/>
            <person name="Zhang Y."/>
            <person name="Huang X."/>
            <person name="Su Z."/>
            <person name="Tong W."/>
            <person name="Li J."/>
            <person name="Tong Z."/>
            <person name="Li S."/>
            <person name="Ye J."/>
            <person name="Wang L."/>
            <person name="Fang L."/>
            <person name="Lei T."/>
            <person name="Chen C.-S."/>
            <person name="Chen H.-C."/>
            <person name="Xu Z."/>
            <person name="Li H."/>
            <person name="Huang H."/>
            <person name="Zhang F."/>
            <person name="Xu H."/>
            <person name="Li N."/>
            <person name="Zhao C."/>
            <person name="Li S."/>
            <person name="Dong L."/>
            <person name="Huang Y."/>
            <person name="Li L."/>
            <person name="Xi Y."/>
            <person name="Qi Q."/>
            <person name="Li W."/>
            <person name="Zhang B."/>
            <person name="Hu W."/>
            <person name="Zhang Y."/>
            <person name="Tian X."/>
            <person name="Jiao Y."/>
            <person name="Liang X."/>
            <person name="Jin J."/>
            <person name="Gao L."/>
            <person name="Zheng W."/>
            <person name="Hao B."/>
            <person name="Liu S.-M."/>
            <person name="Wang W."/>
            <person name="Yuan L."/>
            <person name="Cao M."/>
            <person name="McDermott J."/>
            <person name="Samudrala R."/>
            <person name="Wang J."/>
            <person name="Wong G.K.-S."/>
            <person name="Yang H."/>
        </authorList>
    </citation>
    <scope>NUCLEOTIDE SEQUENCE [LARGE SCALE GENOMIC DNA]</scope>
    <source>
        <strain>cv. Nipponbare</strain>
    </source>
</reference>
<reference key="5">
    <citation type="journal article" date="2003" name="Science">
        <title>Collection, mapping, and annotation of over 28,000 cDNA clones from japonica rice.</title>
        <authorList>
            <consortium name="The rice full-length cDNA consortium"/>
        </authorList>
    </citation>
    <scope>NUCLEOTIDE SEQUENCE [LARGE SCALE MRNA]</scope>
    <source>
        <strain>cv. Nipponbare</strain>
    </source>
</reference>
<reference key="6">
    <citation type="journal article" date="2007" name="Gene">
        <title>Genome-wide analysis of the auxin response factors (ARF) gene family in rice (Oryza sativa).</title>
        <authorList>
            <person name="Wang D."/>
            <person name="Pei K."/>
            <person name="Fu Y."/>
            <person name="Sun Z."/>
            <person name="Li S."/>
            <person name="Liu H."/>
            <person name="Tang K."/>
            <person name="Han B."/>
            <person name="Tao Y."/>
        </authorList>
    </citation>
    <scope>GENE FAMILY</scope>
    <scope>TISSUE SPECIFICITY</scope>
    <scope>NOMENCLATURE</scope>
</reference>
<keyword id="KW-0927">Auxin signaling pathway</keyword>
<keyword id="KW-0238">DNA-binding</keyword>
<keyword id="KW-0539">Nucleus</keyword>
<keyword id="KW-1185">Reference proteome</keyword>
<keyword id="KW-0804">Transcription</keyword>
<keyword id="KW-0805">Transcription regulation</keyword>
<feature type="chain" id="PRO_0000299261" description="Auxin response factor 7">
    <location>
        <begin position="1"/>
        <end position="678"/>
    </location>
</feature>
<feature type="domain" description="PB1" evidence="3">
    <location>
        <begin position="548"/>
        <end position="641"/>
    </location>
</feature>
<feature type="DNA-binding region" description="TF-B3" evidence="2">
    <location>
        <begin position="128"/>
        <end position="230"/>
    </location>
</feature>
<feature type="region of interest" description="Disordered" evidence="4">
    <location>
        <begin position="360"/>
        <end position="386"/>
    </location>
</feature>
<feature type="region of interest" description="Disordered" evidence="4">
    <location>
        <begin position="502"/>
        <end position="547"/>
    </location>
</feature>
<feature type="region of interest" description="Disordered" evidence="4">
    <location>
        <begin position="643"/>
        <end position="678"/>
    </location>
</feature>
<feature type="sequence conflict" description="In Ref. 5; AK070026." evidence="6" ref="5">
    <original>V</original>
    <variation>F</variation>
    <location>
        <position position="250"/>
    </location>
</feature>
<comment type="function">
    <text>Auxin response factors (ARFs) are transcriptional factors that bind specifically to the DNA sequence 5'-TGTCTC-3' found in the auxin-responsive promoter elements (AuxREs).</text>
</comment>
<comment type="subunit">
    <text evidence="1">Homodimers and heterodimers.</text>
</comment>
<comment type="subcellular location">
    <subcellularLocation>
        <location evidence="2">Nucleus</location>
    </subcellularLocation>
</comment>
<comment type="tissue specificity">
    <text evidence="5">Expressed in roots, culms, leaves and young panicles.</text>
</comment>
<comment type="domain">
    <text>Interactions between auxin response factors (ARFs) and Aux/IAA proteins occur through their C-terminal dimerization domains III and IV.</text>
</comment>
<comment type="similarity">
    <text evidence="6">Belongs to the ARF family.</text>
</comment>
<accession>Q6YVY0</accession>
<accession>B9F0K2</accession>